<protein>
    <recommendedName>
        <fullName evidence="1">Succinyl-diaminopimelate desuccinylase</fullName>
        <shortName evidence="1">SDAP desuccinylase</shortName>
        <ecNumber evidence="1">3.5.1.18</ecNumber>
    </recommendedName>
    <alternativeName>
        <fullName evidence="1">N-succinyl-LL-2,6-diaminoheptanedioate amidohydrolase</fullName>
    </alternativeName>
</protein>
<keyword id="KW-0028">Amino-acid biosynthesis</keyword>
<keyword id="KW-0170">Cobalt</keyword>
<keyword id="KW-0220">Diaminopimelate biosynthesis</keyword>
<keyword id="KW-0378">Hydrolase</keyword>
<keyword id="KW-0457">Lysine biosynthesis</keyword>
<keyword id="KW-0479">Metal-binding</keyword>
<keyword id="KW-0862">Zinc</keyword>
<dbReference type="EC" id="3.5.1.18" evidence="1"/>
<dbReference type="EMBL" id="CP001172">
    <property type="protein sequence ID" value="ACJ58750.1"/>
    <property type="molecule type" value="Genomic_DNA"/>
</dbReference>
<dbReference type="RefSeq" id="WP_001016572.1">
    <property type="nucleotide sequence ID" value="NZ_CP001172.1"/>
</dbReference>
<dbReference type="SMR" id="B7GXA3"/>
<dbReference type="HOGENOM" id="CLU_021802_4_0_6"/>
<dbReference type="UniPathway" id="UPA00034">
    <property type="reaction ID" value="UER00021"/>
</dbReference>
<dbReference type="Proteomes" id="UP000006924">
    <property type="component" value="Chromosome"/>
</dbReference>
<dbReference type="GO" id="GO:0008777">
    <property type="term" value="F:acetylornithine deacetylase activity"/>
    <property type="evidence" value="ECO:0007669"/>
    <property type="project" value="TreeGrafter"/>
</dbReference>
<dbReference type="GO" id="GO:0050897">
    <property type="term" value="F:cobalt ion binding"/>
    <property type="evidence" value="ECO:0007669"/>
    <property type="project" value="UniProtKB-UniRule"/>
</dbReference>
<dbReference type="GO" id="GO:0009014">
    <property type="term" value="F:succinyl-diaminopimelate desuccinylase activity"/>
    <property type="evidence" value="ECO:0007669"/>
    <property type="project" value="UniProtKB-UniRule"/>
</dbReference>
<dbReference type="GO" id="GO:0008270">
    <property type="term" value="F:zinc ion binding"/>
    <property type="evidence" value="ECO:0007669"/>
    <property type="project" value="UniProtKB-UniRule"/>
</dbReference>
<dbReference type="GO" id="GO:0019877">
    <property type="term" value="P:diaminopimelate biosynthetic process"/>
    <property type="evidence" value="ECO:0007669"/>
    <property type="project" value="UniProtKB-UniRule"/>
</dbReference>
<dbReference type="GO" id="GO:0006526">
    <property type="term" value="P:L-arginine biosynthetic process"/>
    <property type="evidence" value="ECO:0007669"/>
    <property type="project" value="TreeGrafter"/>
</dbReference>
<dbReference type="GO" id="GO:0009089">
    <property type="term" value="P:lysine biosynthetic process via diaminopimelate"/>
    <property type="evidence" value="ECO:0007669"/>
    <property type="project" value="UniProtKB-UniRule"/>
</dbReference>
<dbReference type="CDD" id="cd03891">
    <property type="entry name" value="M20_DapE_proteobac"/>
    <property type="match status" value="1"/>
</dbReference>
<dbReference type="FunFam" id="3.40.630.10:FF:000005">
    <property type="entry name" value="Succinyl-diaminopimelate desuccinylase"/>
    <property type="match status" value="1"/>
</dbReference>
<dbReference type="Gene3D" id="3.40.630.10">
    <property type="entry name" value="Zn peptidases"/>
    <property type="match status" value="2"/>
</dbReference>
<dbReference type="HAMAP" id="MF_01690">
    <property type="entry name" value="DapE"/>
    <property type="match status" value="1"/>
</dbReference>
<dbReference type="InterPro" id="IPR036264">
    <property type="entry name" value="Bact_exopeptidase_dim_dom"/>
</dbReference>
<dbReference type="InterPro" id="IPR005941">
    <property type="entry name" value="DapE_proteobac"/>
</dbReference>
<dbReference type="InterPro" id="IPR002933">
    <property type="entry name" value="Peptidase_M20"/>
</dbReference>
<dbReference type="InterPro" id="IPR011650">
    <property type="entry name" value="Peptidase_M20_dimer"/>
</dbReference>
<dbReference type="InterPro" id="IPR050072">
    <property type="entry name" value="Peptidase_M20A"/>
</dbReference>
<dbReference type="NCBIfam" id="TIGR01246">
    <property type="entry name" value="dapE_proteo"/>
    <property type="match status" value="1"/>
</dbReference>
<dbReference type="NCBIfam" id="NF009557">
    <property type="entry name" value="PRK13009.1"/>
    <property type="match status" value="1"/>
</dbReference>
<dbReference type="PANTHER" id="PTHR43808">
    <property type="entry name" value="ACETYLORNITHINE DEACETYLASE"/>
    <property type="match status" value="1"/>
</dbReference>
<dbReference type="PANTHER" id="PTHR43808:SF31">
    <property type="entry name" value="N-ACETYL-L-CITRULLINE DEACETYLASE"/>
    <property type="match status" value="1"/>
</dbReference>
<dbReference type="Pfam" id="PF07687">
    <property type="entry name" value="M20_dimer"/>
    <property type="match status" value="1"/>
</dbReference>
<dbReference type="Pfam" id="PF01546">
    <property type="entry name" value="Peptidase_M20"/>
    <property type="match status" value="1"/>
</dbReference>
<dbReference type="SUPFAM" id="SSF55031">
    <property type="entry name" value="Bacterial exopeptidase dimerisation domain"/>
    <property type="match status" value="1"/>
</dbReference>
<dbReference type="SUPFAM" id="SSF53187">
    <property type="entry name" value="Zn-dependent exopeptidases"/>
    <property type="match status" value="1"/>
</dbReference>
<comment type="function">
    <text evidence="1">Catalyzes the hydrolysis of N-succinyl-L,L-diaminopimelic acid (SDAP), forming succinate and LL-2,6-diaminopimelate (DAP), an intermediate involved in the bacterial biosynthesis of lysine and meso-diaminopimelic acid, an essential component of bacterial cell walls.</text>
</comment>
<comment type="catalytic activity">
    <reaction evidence="1">
        <text>N-succinyl-(2S,6S)-2,6-diaminopimelate + H2O = (2S,6S)-2,6-diaminopimelate + succinate</text>
        <dbReference type="Rhea" id="RHEA:22608"/>
        <dbReference type="ChEBI" id="CHEBI:15377"/>
        <dbReference type="ChEBI" id="CHEBI:30031"/>
        <dbReference type="ChEBI" id="CHEBI:57609"/>
        <dbReference type="ChEBI" id="CHEBI:58087"/>
        <dbReference type="EC" id="3.5.1.18"/>
    </reaction>
</comment>
<comment type="cofactor">
    <cofactor evidence="1">
        <name>Zn(2+)</name>
        <dbReference type="ChEBI" id="CHEBI:29105"/>
    </cofactor>
    <cofactor evidence="1">
        <name>Co(2+)</name>
        <dbReference type="ChEBI" id="CHEBI:48828"/>
    </cofactor>
    <text evidence="1">Binds 2 Zn(2+) or Co(2+) ions per subunit.</text>
</comment>
<comment type="pathway">
    <text evidence="1">Amino-acid biosynthesis; L-lysine biosynthesis via DAP pathway; LL-2,6-diaminopimelate from (S)-tetrahydrodipicolinate (succinylase route): step 3/3.</text>
</comment>
<comment type="subunit">
    <text evidence="1">Homodimer.</text>
</comment>
<comment type="similarity">
    <text evidence="1">Belongs to the peptidase M20A family. DapE subfamily.</text>
</comment>
<organism>
    <name type="scientific">Acinetobacter baumannii (strain AB307-0294)</name>
    <dbReference type="NCBI Taxonomy" id="557600"/>
    <lineage>
        <taxon>Bacteria</taxon>
        <taxon>Pseudomonadati</taxon>
        <taxon>Pseudomonadota</taxon>
        <taxon>Gammaproteobacteria</taxon>
        <taxon>Moraxellales</taxon>
        <taxon>Moraxellaceae</taxon>
        <taxon>Acinetobacter</taxon>
        <taxon>Acinetobacter calcoaceticus/baumannii complex</taxon>
    </lineage>
</organism>
<sequence>MNHSDTLSLSLELLQQPSVTPIDHTCQTIMADRLAKVGFHIEPMRFGDVDNLWARRGTEGPVFCFAGHTDVVPTGRLDAWNSDPFAPEIRDGKLYGRGSADMKTALAAMVVASERFVAKHPNHKGSIAFLITSDEEGPAVNGTVKVIETLEKRNEKITWCLVGEPSSTHKLGDIVKNGRRGSLNAVLKVQGKQGHVAYPHLARNPIHEASPALAELCQTVWDNGNEYFPATSFQISNIHAGTGATNVIPGALEVTFNFRYSTEVTAEQLKQRVHEILDKHGLQYEIVWNLSGLPFLTPVGELVNAAQTAILNVTGTETELSTSGGTSDGRFIAPTGAQVLELGVLNATIHQINEHVDVHDLDPLTDIYEQILENLLA</sequence>
<feature type="chain" id="PRO_0000375443" description="Succinyl-diaminopimelate desuccinylase">
    <location>
        <begin position="1"/>
        <end position="377"/>
    </location>
</feature>
<feature type="active site" evidence="1">
    <location>
        <position position="70"/>
    </location>
</feature>
<feature type="active site" description="Proton acceptor" evidence="1">
    <location>
        <position position="135"/>
    </location>
</feature>
<feature type="binding site" evidence="1">
    <location>
        <position position="68"/>
    </location>
    <ligand>
        <name>Zn(2+)</name>
        <dbReference type="ChEBI" id="CHEBI:29105"/>
        <label>1</label>
    </ligand>
</feature>
<feature type="binding site" evidence="1">
    <location>
        <position position="101"/>
    </location>
    <ligand>
        <name>Zn(2+)</name>
        <dbReference type="ChEBI" id="CHEBI:29105"/>
        <label>1</label>
    </ligand>
</feature>
<feature type="binding site" evidence="1">
    <location>
        <position position="101"/>
    </location>
    <ligand>
        <name>Zn(2+)</name>
        <dbReference type="ChEBI" id="CHEBI:29105"/>
        <label>2</label>
    </ligand>
</feature>
<feature type="binding site" evidence="1">
    <location>
        <position position="136"/>
    </location>
    <ligand>
        <name>Zn(2+)</name>
        <dbReference type="ChEBI" id="CHEBI:29105"/>
        <label>2</label>
    </ligand>
</feature>
<feature type="binding site" evidence="1">
    <location>
        <position position="164"/>
    </location>
    <ligand>
        <name>Zn(2+)</name>
        <dbReference type="ChEBI" id="CHEBI:29105"/>
        <label>1</label>
    </ligand>
</feature>
<feature type="binding site" evidence="1">
    <location>
        <position position="350"/>
    </location>
    <ligand>
        <name>Zn(2+)</name>
        <dbReference type="ChEBI" id="CHEBI:29105"/>
        <label>2</label>
    </ligand>
</feature>
<accession>B7GXA3</accession>
<name>DAPE_ACIB3</name>
<reference key="1">
    <citation type="journal article" date="2008" name="J. Bacteriol.">
        <title>Comparative genome sequence analysis of multidrug-resistant Acinetobacter baumannii.</title>
        <authorList>
            <person name="Adams M.D."/>
            <person name="Goglin K."/>
            <person name="Molyneaux N."/>
            <person name="Hujer K.M."/>
            <person name="Lavender H."/>
            <person name="Jamison J.J."/>
            <person name="MacDonald I.J."/>
            <person name="Martin K.M."/>
            <person name="Russo T."/>
            <person name="Campagnari A.A."/>
            <person name="Hujer A.M."/>
            <person name="Bonomo R.A."/>
            <person name="Gill S.R."/>
        </authorList>
    </citation>
    <scope>NUCLEOTIDE SEQUENCE [LARGE SCALE GENOMIC DNA]</scope>
    <source>
        <strain>AB307-0294</strain>
    </source>
</reference>
<evidence type="ECO:0000255" key="1">
    <source>
        <dbReference type="HAMAP-Rule" id="MF_01690"/>
    </source>
</evidence>
<proteinExistence type="inferred from homology"/>
<gene>
    <name evidence="1" type="primary">dapE</name>
    <name type="ordered locus">ABBFA_000655</name>
</gene>